<name>INO1A_XENLA</name>
<protein>
    <recommendedName>
        <fullName>Inositol-3-phosphate synthase 1-A</fullName>
        <shortName>IPS 1-A</shortName>
        <ecNumber>5.5.1.4</ecNumber>
    </recommendedName>
    <alternativeName>
        <fullName>Myo-inositol 1-phosphate synthase A</fullName>
        <shortName>MI-1-P synthase A</shortName>
        <shortName>MIP synthase A</shortName>
    </alternativeName>
</protein>
<organism>
    <name type="scientific">Xenopus laevis</name>
    <name type="common">African clawed frog</name>
    <dbReference type="NCBI Taxonomy" id="8355"/>
    <lineage>
        <taxon>Eukaryota</taxon>
        <taxon>Metazoa</taxon>
        <taxon>Chordata</taxon>
        <taxon>Craniata</taxon>
        <taxon>Vertebrata</taxon>
        <taxon>Euteleostomi</taxon>
        <taxon>Amphibia</taxon>
        <taxon>Batrachia</taxon>
        <taxon>Anura</taxon>
        <taxon>Pipoidea</taxon>
        <taxon>Pipidae</taxon>
        <taxon>Xenopodinae</taxon>
        <taxon>Xenopus</taxon>
        <taxon>Xenopus</taxon>
    </lineage>
</organism>
<proteinExistence type="evidence at transcript level"/>
<comment type="function">
    <text evidence="1">Key enzyme in myo-inositol biosynthesis pathway that catalyzes the conversion of glucose 6-phosphate to 1-myo-inositol 1-phosphate in a NAD-dependent manner. Rate-limiting enzyme in the synthesis of all inositol-containing compounds (By similarity).</text>
</comment>
<comment type="catalytic activity">
    <reaction>
        <text>D-glucose 6-phosphate = 1D-myo-inositol 3-phosphate</text>
        <dbReference type="Rhea" id="RHEA:10716"/>
        <dbReference type="ChEBI" id="CHEBI:58401"/>
        <dbReference type="ChEBI" id="CHEBI:61548"/>
        <dbReference type="EC" id="5.5.1.4"/>
    </reaction>
</comment>
<comment type="cofactor">
    <cofactor evidence="1">
        <name>NAD(+)</name>
        <dbReference type="ChEBI" id="CHEBI:57540"/>
    </cofactor>
</comment>
<comment type="pathway">
    <text>Polyol metabolism; myo-inositol biosynthesis; myo-inositol from D-glucose 6-phosphate: step 1/2.</text>
</comment>
<comment type="subcellular location">
    <subcellularLocation>
        <location evidence="1">Cytoplasm</location>
    </subcellularLocation>
</comment>
<comment type="similarity">
    <text evidence="2">Belongs to the myo-inositol 1-phosphate synthase family.</text>
</comment>
<keyword id="KW-0963">Cytoplasm</keyword>
<keyword id="KW-0398">Inositol biosynthesis</keyword>
<keyword id="KW-0413">Isomerase</keyword>
<keyword id="KW-0444">Lipid biosynthesis</keyword>
<keyword id="KW-0443">Lipid metabolism</keyword>
<keyword id="KW-0520">NAD</keyword>
<keyword id="KW-0594">Phospholipid biosynthesis</keyword>
<keyword id="KW-1208">Phospholipid metabolism</keyword>
<keyword id="KW-1185">Reference proteome</keyword>
<gene>
    <name type="primary">isyna1-a</name>
    <name type="synonym">ino1-a</name>
</gene>
<feature type="chain" id="PRO_0000324632" description="Inositol-3-phosphate synthase 1-A">
    <location>
        <begin position="1"/>
        <end position="563"/>
    </location>
</feature>
<dbReference type="EC" id="5.5.1.4"/>
<dbReference type="EMBL" id="BC044073">
    <property type="protein sequence ID" value="AAH44073.1"/>
    <property type="molecule type" value="mRNA"/>
</dbReference>
<dbReference type="RefSeq" id="NP_001079540.1">
    <property type="nucleotide sequence ID" value="NM_001086071.1"/>
</dbReference>
<dbReference type="SMR" id="Q7ZXY0"/>
<dbReference type="DNASU" id="379227"/>
<dbReference type="GeneID" id="379227"/>
<dbReference type="KEGG" id="xla:379227"/>
<dbReference type="AGR" id="Xenbase:XB-GENE-969423"/>
<dbReference type="CTD" id="379227"/>
<dbReference type="Xenbase" id="XB-GENE-969423">
    <property type="gene designation" value="isyna1.S"/>
</dbReference>
<dbReference type="OrthoDB" id="2887at2759"/>
<dbReference type="UniPathway" id="UPA00823">
    <property type="reaction ID" value="UER00787"/>
</dbReference>
<dbReference type="Proteomes" id="UP000186698">
    <property type="component" value="Chromosome 1S"/>
</dbReference>
<dbReference type="Bgee" id="379227">
    <property type="expression patterns" value="Expressed in ovary and 20 other cell types or tissues"/>
</dbReference>
<dbReference type="GO" id="GO:0005737">
    <property type="term" value="C:cytoplasm"/>
    <property type="evidence" value="ECO:0000318"/>
    <property type="project" value="GO_Central"/>
</dbReference>
<dbReference type="GO" id="GO:0004512">
    <property type="term" value="F:inositol-3-phosphate synthase activity"/>
    <property type="evidence" value="ECO:0000318"/>
    <property type="project" value="GO_Central"/>
</dbReference>
<dbReference type="GO" id="GO:0006021">
    <property type="term" value="P:inositol biosynthetic process"/>
    <property type="evidence" value="ECO:0000318"/>
    <property type="project" value="GO_Central"/>
</dbReference>
<dbReference type="GO" id="GO:0008654">
    <property type="term" value="P:phospholipid biosynthetic process"/>
    <property type="evidence" value="ECO:0007669"/>
    <property type="project" value="UniProtKB-KW"/>
</dbReference>
<dbReference type="FunFam" id="3.40.50.720:FF:000069">
    <property type="entry name" value="Inositol-3-phosphate synthase 1"/>
    <property type="match status" value="1"/>
</dbReference>
<dbReference type="FunFam" id="3.40.50.720:FF:000171">
    <property type="entry name" value="inositol-3-phosphate synthase 1"/>
    <property type="match status" value="1"/>
</dbReference>
<dbReference type="FunFam" id="3.30.360.10:FF:000055">
    <property type="entry name" value="Putative myo-inositol-1-phosphate synthase"/>
    <property type="match status" value="1"/>
</dbReference>
<dbReference type="Gene3D" id="3.40.50.720">
    <property type="entry name" value="NAD(P)-binding Rossmann-like Domain"/>
    <property type="match status" value="2"/>
</dbReference>
<dbReference type="InterPro" id="IPR002587">
    <property type="entry name" value="Myo-inos-1-P_Synthase"/>
</dbReference>
<dbReference type="InterPro" id="IPR013021">
    <property type="entry name" value="Myo-inos-1-P_Synthase_GAPDH"/>
</dbReference>
<dbReference type="InterPro" id="IPR036291">
    <property type="entry name" value="NAD(P)-bd_dom_sf"/>
</dbReference>
<dbReference type="PANTHER" id="PTHR11510">
    <property type="entry name" value="MYO-INOSITOL-1 PHOSPHATE SYNTHASE"/>
    <property type="match status" value="1"/>
</dbReference>
<dbReference type="Pfam" id="PF01658">
    <property type="entry name" value="Inos-1-P_synth"/>
    <property type="match status" value="1"/>
</dbReference>
<dbReference type="Pfam" id="PF07994">
    <property type="entry name" value="NAD_binding_5"/>
    <property type="match status" value="1"/>
</dbReference>
<dbReference type="PIRSF" id="PIRSF015578">
    <property type="entry name" value="Myoinos-ppht_syn"/>
    <property type="match status" value="1"/>
</dbReference>
<dbReference type="SUPFAM" id="SSF55347">
    <property type="entry name" value="Glyceraldehyde-3-phosphate dehydrogenase-like, C-terminal domain"/>
    <property type="match status" value="1"/>
</dbReference>
<dbReference type="SUPFAM" id="SSF51735">
    <property type="entry name" value="NAD(P)-binding Rossmann-fold domains"/>
    <property type="match status" value="1"/>
</dbReference>
<reference key="1">
    <citation type="submission" date="2003-01" db="EMBL/GenBank/DDBJ databases">
        <authorList>
            <consortium name="NIH - Xenopus Gene Collection (XGC) project"/>
        </authorList>
    </citation>
    <scope>NUCLEOTIDE SEQUENCE [LARGE SCALE MRNA]</scope>
    <source>
        <tissue>Embryo</tissue>
    </source>
</reference>
<sequence length="563" mass="62355">MAEKFKVESPHVRYLKDVIEADYNYDTTQVYEEKGVTKVKPCSTKFTFHTERKVPKLGVMLVGWGGNNGTTVTAAVLANRLGLSWMTKTGKKVANYYGSLFQSSTACLGSGPAGDVFVPFRDLLPMVHPNDIVFDGWDISSLNLADAMFRAEVLDWQIQEQLRPYMEKMKPRPSIYIPDFIAANQEDRADHTIHGTKAEQVQKIREDIQDFKRTSDVDKVIVLWTANTERFCDIIPGVNDTADNLLKAIENGLEVSPSTMFAVASILEGCAYINGSPQNTFVPGAIELAVQNNVFIGGDDFKSGQTKIKSVLMDFLVSAGLKPVSIVSYNHLGNNDGKNLSAPQQFRSKEISKSNVVDDMVQSNPILYGPNEKPDHCVVIKYVPYVGDSKRAMDEYTSEIMMGGANTIVLHNTCEDSLLASPIILDLVLLTELCQRITFRTETDQEFQTFHSVLSILSFLCKAPLVPAGTPVINAFFRQRNCIENILRACLGLSPQNHMMLEHKMQRSFVSLKRPSTVCNPQPISSKKGNNANGFHLPGISKGLSQSNGLGKNVINSDIEIEN</sequence>
<accession>Q7ZXY0</accession>
<evidence type="ECO:0000250" key="1"/>
<evidence type="ECO:0000305" key="2"/>